<organism>
    <name type="scientific">Homo sapiens</name>
    <name type="common">Human</name>
    <dbReference type="NCBI Taxonomy" id="9606"/>
    <lineage>
        <taxon>Eukaryota</taxon>
        <taxon>Metazoa</taxon>
        <taxon>Chordata</taxon>
        <taxon>Craniata</taxon>
        <taxon>Vertebrata</taxon>
        <taxon>Euteleostomi</taxon>
        <taxon>Mammalia</taxon>
        <taxon>Eutheria</taxon>
        <taxon>Euarchontoglires</taxon>
        <taxon>Primates</taxon>
        <taxon>Haplorrhini</taxon>
        <taxon>Catarrhini</taxon>
        <taxon>Hominidae</taxon>
        <taxon>Homo</taxon>
    </lineage>
</organism>
<dbReference type="EC" id="2.4.3.7" evidence="5 6"/>
<dbReference type="EMBL" id="AJ507291">
    <property type="protein sequence ID" value="CAD45371.1"/>
    <property type="molecule type" value="mRNA"/>
</dbReference>
<dbReference type="EMBL" id="AK091215">
    <property type="protein sequence ID" value="BAC03611.1"/>
    <property type="molecule type" value="mRNA"/>
</dbReference>
<dbReference type="EMBL" id="AY358540">
    <property type="protein sequence ID" value="AAQ88904.1"/>
    <property type="molecule type" value="mRNA"/>
</dbReference>
<dbReference type="EMBL" id="CH471059">
    <property type="protein sequence ID" value="EAX06388.1"/>
    <property type="molecule type" value="Genomic_DNA"/>
</dbReference>
<dbReference type="EMBL" id="BC059363">
    <property type="protein sequence ID" value="AAH59363.1"/>
    <property type="molecule type" value="mRNA"/>
</dbReference>
<dbReference type="CCDS" id="CCDS672.1">
    <molecule id="Q8NDV1-1"/>
</dbReference>
<dbReference type="RefSeq" id="NP_001153483.1">
    <molecule id="Q8NDV1-2"/>
    <property type="nucleotide sequence ID" value="NM_001160011.3"/>
</dbReference>
<dbReference type="RefSeq" id="NP_694541.2">
    <molecule id="Q8NDV1-1"/>
    <property type="nucleotide sequence ID" value="NM_152996.4"/>
</dbReference>
<dbReference type="SMR" id="Q8NDV1"/>
<dbReference type="BioGRID" id="129166">
    <property type="interactions" value="82"/>
</dbReference>
<dbReference type="FunCoup" id="Q8NDV1">
    <property type="interactions" value="1108"/>
</dbReference>
<dbReference type="IntAct" id="Q8NDV1">
    <property type="interactions" value="26"/>
</dbReference>
<dbReference type="STRING" id="9606.ENSP00000329214"/>
<dbReference type="SwissLipids" id="SLP:000001364">
    <molecule id="Q8NDV1-1"/>
</dbReference>
<dbReference type="SwissLipids" id="SLP:000001373"/>
<dbReference type="CAZy" id="GT29">
    <property type="family name" value="Glycosyltransferase Family 29"/>
</dbReference>
<dbReference type="GlyCosmos" id="Q8NDV1">
    <property type="glycosylation" value="3 sites, No reported glycans"/>
</dbReference>
<dbReference type="GlyGen" id="Q8NDV1">
    <property type="glycosylation" value="5 sites, 1 O-linked glycan (2 sites)"/>
</dbReference>
<dbReference type="iPTMnet" id="Q8NDV1"/>
<dbReference type="PhosphoSitePlus" id="Q8NDV1"/>
<dbReference type="BioMuta" id="ST6GALNAC3"/>
<dbReference type="DMDM" id="48428651"/>
<dbReference type="jPOST" id="Q8NDV1"/>
<dbReference type="MassIVE" id="Q8NDV1"/>
<dbReference type="PaxDb" id="9606-ENSP00000329214"/>
<dbReference type="PeptideAtlas" id="Q8NDV1"/>
<dbReference type="ProteomicsDB" id="73055">
    <molecule id="Q8NDV1-1"/>
</dbReference>
<dbReference type="ProteomicsDB" id="73056">
    <molecule id="Q8NDV1-2"/>
</dbReference>
<dbReference type="Pumba" id="Q8NDV1"/>
<dbReference type="Antibodypedia" id="33477">
    <property type="antibodies" value="49 antibodies from 14 providers"/>
</dbReference>
<dbReference type="DNASU" id="256435"/>
<dbReference type="Ensembl" id="ENST00000328299.4">
    <molecule id="Q8NDV1-1"/>
    <property type="protein sequence ID" value="ENSP00000329214.3"/>
    <property type="gene ID" value="ENSG00000184005.12"/>
</dbReference>
<dbReference type="GeneID" id="256435"/>
<dbReference type="KEGG" id="hsa:256435"/>
<dbReference type="MANE-Select" id="ENST00000328299.4">
    <property type="protein sequence ID" value="ENSP00000329214.3"/>
    <property type="RefSeq nucleotide sequence ID" value="NM_152996.4"/>
    <property type="RefSeq protein sequence ID" value="NP_694541.2"/>
</dbReference>
<dbReference type="UCSC" id="uc001dhh.3">
    <molecule id="Q8NDV1-1"/>
    <property type="organism name" value="human"/>
</dbReference>
<dbReference type="AGR" id="HGNC:19343"/>
<dbReference type="CTD" id="256435"/>
<dbReference type="DisGeNET" id="256435"/>
<dbReference type="GeneCards" id="ST6GALNAC3"/>
<dbReference type="HGNC" id="HGNC:19343">
    <property type="gene designation" value="ST6GALNAC3"/>
</dbReference>
<dbReference type="HPA" id="ENSG00000184005">
    <property type="expression patterns" value="Low tissue specificity"/>
</dbReference>
<dbReference type="MIM" id="610133">
    <property type="type" value="gene"/>
</dbReference>
<dbReference type="neXtProt" id="NX_Q8NDV1"/>
<dbReference type="OpenTargets" id="ENSG00000184005"/>
<dbReference type="PharmGKB" id="PA134984080"/>
<dbReference type="VEuPathDB" id="HostDB:ENSG00000184005"/>
<dbReference type="eggNOG" id="KOG2692">
    <property type="taxonomic scope" value="Eukaryota"/>
</dbReference>
<dbReference type="GeneTree" id="ENSGT00940000159735"/>
<dbReference type="HOGENOM" id="CLU_061099_2_0_1"/>
<dbReference type="InParanoid" id="Q8NDV1"/>
<dbReference type="OMA" id="PGAKWIP"/>
<dbReference type="OrthoDB" id="10264956at2759"/>
<dbReference type="PAN-GO" id="Q8NDV1">
    <property type="GO annotations" value="3 GO annotations based on evolutionary models"/>
</dbReference>
<dbReference type="PhylomeDB" id="Q8NDV1"/>
<dbReference type="TreeFam" id="TF352818"/>
<dbReference type="BRENDA" id="2.4.99.7">
    <property type="organism ID" value="2681"/>
</dbReference>
<dbReference type="PathwayCommons" id="Q8NDV1"/>
<dbReference type="Reactome" id="R-HSA-4085001">
    <property type="pathway name" value="Sialic acid metabolism"/>
</dbReference>
<dbReference type="Reactome" id="R-HSA-9683673">
    <property type="pathway name" value="Maturation of protein 3a"/>
</dbReference>
<dbReference type="Reactome" id="R-HSA-9694548">
    <property type="pathway name" value="Maturation of spike protein"/>
</dbReference>
<dbReference type="Reactome" id="R-HSA-9694719">
    <property type="pathway name" value="Maturation of protein 3a"/>
</dbReference>
<dbReference type="Reactome" id="R-HSA-977068">
    <property type="pathway name" value="Termination of O-glycan biosynthesis"/>
</dbReference>
<dbReference type="SignaLink" id="Q8NDV1"/>
<dbReference type="UniPathway" id="UPA00378"/>
<dbReference type="BioGRID-ORCS" id="256435">
    <property type="hits" value="10 hits in 1147 CRISPR screens"/>
</dbReference>
<dbReference type="ChiTaRS" id="ST6GALNAC3">
    <property type="organism name" value="human"/>
</dbReference>
<dbReference type="GenomeRNAi" id="256435"/>
<dbReference type="Pharos" id="Q8NDV1">
    <property type="development level" value="Tbio"/>
</dbReference>
<dbReference type="PRO" id="PR:Q8NDV1"/>
<dbReference type="Proteomes" id="UP000005640">
    <property type="component" value="Chromosome 1"/>
</dbReference>
<dbReference type="RNAct" id="Q8NDV1">
    <property type="molecule type" value="protein"/>
</dbReference>
<dbReference type="Bgee" id="ENSG00000184005">
    <property type="expression patterns" value="Expressed in corpus callosum and 143 other cell types or tissues"/>
</dbReference>
<dbReference type="ExpressionAtlas" id="Q8NDV1">
    <property type="expression patterns" value="baseline and differential"/>
</dbReference>
<dbReference type="GO" id="GO:0000139">
    <property type="term" value="C:Golgi membrane"/>
    <property type="evidence" value="ECO:0000304"/>
    <property type="project" value="Reactome"/>
</dbReference>
<dbReference type="GO" id="GO:0005654">
    <property type="term" value="C:nucleoplasm"/>
    <property type="evidence" value="ECO:0000314"/>
    <property type="project" value="HPA"/>
</dbReference>
<dbReference type="GO" id="GO:0001665">
    <property type="term" value="F:alpha-N-acetylgalactosaminide alpha-2,6-sialyltransferase activity"/>
    <property type="evidence" value="ECO:0000318"/>
    <property type="project" value="GO_Central"/>
</dbReference>
<dbReference type="GO" id="GO:0047290">
    <property type="term" value="F:alpha-N-acetylneuraminyl-2,3-beta-galactosyl-1,3-N-acetyl-galactosaminide 6-alpha-sialyltransferase activity"/>
    <property type="evidence" value="ECO:0007669"/>
    <property type="project" value="RHEA"/>
</dbReference>
<dbReference type="GO" id="GO:0008373">
    <property type="term" value="F:sialyltransferase activity"/>
    <property type="evidence" value="ECO:0000314"/>
    <property type="project" value="BHF-UCL"/>
</dbReference>
<dbReference type="GO" id="GO:0001574">
    <property type="term" value="P:ganglioside biosynthetic process"/>
    <property type="evidence" value="ECO:0000318"/>
    <property type="project" value="GO_Central"/>
</dbReference>
<dbReference type="GO" id="GO:0009100">
    <property type="term" value="P:glycoprotein metabolic process"/>
    <property type="evidence" value="ECO:0000314"/>
    <property type="project" value="BHF-UCL"/>
</dbReference>
<dbReference type="GO" id="GO:0006687">
    <property type="term" value="P:glycosphingolipid metabolic process"/>
    <property type="evidence" value="ECO:0000314"/>
    <property type="project" value="BHF-UCL"/>
</dbReference>
<dbReference type="GO" id="GO:0006677">
    <property type="term" value="P:glycosylceramide metabolic process"/>
    <property type="evidence" value="ECO:0000314"/>
    <property type="project" value="BHF-UCL"/>
</dbReference>
<dbReference type="GO" id="GO:0009311">
    <property type="term" value="P:oligosaccharide metabolic process"/>
    <property type="evidence" value="ECO:0000318"/>
    <property type="project" value="GO_Central"/>
</dbReference>
<dbReference type="GO" id="GO:0006486">
    <property type="term" value="P:protein glycosylation"/>
    <property type="evidence" value="ECO:0007669"/>
    <property type="project" value="UniProtKB-UniPathway"/>
</dbReference>
<dbReference type="GO" id="GO:0019082">
    <property type="term" value="P:viral protein processing"/>
    <property type="evidence" value="ECO:0000304"/>
    <property type="project" value="Reactome"/>
</dbReference>
<dbReference type="CDD" id="cd23975">
    <property type="entry name" value="GT29_ST6GALNAC3"/>
    <property type="match status" value="1"/>
</dbReference>
<dbReference type="FunFam" id="3.90.1480.20:FF:000008">
    <property type="entry name" value="ST6 N-acetylgalactosaminide alpha-2,6-sialyltransferase 3"/>
    <property type="match status" value="1"/>
</dbReference>
<dbReference type="Gene3D" id="3.90.1480.20">
    <property type="entry name" value="Glycosyl transferase family 29"/>
    <property type="match status" value="1"/>
</dbReference>
<dbReference type="InterPro" id="IPR001675">
    <property type="entry name" value="Glyco_trans_29"/>
</dbReference>
<dbReference type="InterPro" id="IPR038578">
    <property type="entry name" value="GT29-like_sf"/>
</dbReference>
<dbReference type="PANTHER" id="PTHR45906">
    <property type="entry name" value="ALPHA-N-ACETYL-NEURAMINYL-2,3-BETA-GALACTOSYL-1, 3-N-ACETYL-GALACTOSAMINIDE ALPHA-2,6-SIALYLTRANSFERASE-LIKE"/>
    <property type="match status" value="1"/>
</dbReference>
<dbReference type="PANTHER" id="PTHR45906:SF2">
    <property type="entry name" value="ALPHA-N-ACETYLGALACTOSAMINIDE ALPHA-2,6-SIALYLTRANSFERASE 3"/>
    <property type="match status" value="1"/>
</dbReference>
<dbReference type="Pfam" id="PF00777">
    <property type="entry name" value="Glyco_transf_29"/>
    <property type="match status" value="1"/>
</dbReference>
<evidence type="ECO:0000250" key="1"/>
<evidence type="ECO:0000250" key="2">
    <source>
        <dbReference type="UniProtKB" id="Q9QYJ1"/>
    </source>
</evidence>
<evidence type="ECO:0000255" key="3"/>
<evidence type="ECO:0000269" key="4">
    <source>
    </source>
</evidence>
<evidence type="ECO:0000269" key="5">
    <source>
    </source>
</evidence>
<evidence type="ECO:0000269" key="6">
    <source>
    </source>
</evidence>
<evidence type="ECO:0000269" key="7">
    <source ref="4"/>
</evidence>
<evidence type="ECO:0000303" key="8">
    <source>
    </source>
</evidence>
<evidence type="ECO:0000303" key="9">
    <source>
    </source>
</evidence>
<evidence type="ECO:0000303" key="10">
    <source>
    </source>
</evidence>
<evidence type="ECO:0000305" key="11"/>
<evidence type="ECO:0000305" key="12">
    <source>
    </source>
</evidence>
<evidence type="ECO:0000305" key="13">
    <source>
    </source>
</evidence>
<keyword id="KW-0025">Alternative splicing</keyword>
<keyword id="KW-1015">Disulfide bond</keyword>
<keyword id="KW-0325">Glycoprotein</keyword>
<keyword id="KW-0328">Glycosyltransferase</keyword>
<keyword id="KW-0333">Golgi apparatus</keyword>
<keyword id="KW-0443">Lipid metabolism</keyword>
<keyword id="KW-0472">Membrane</keyword>
<keyword id="KW-1267">Proteomics identification</keyword>
<keyword id="KW-1185">Reference proteome</keyword>
<keyword id="KW-0730">Sialic acid</keyword>
<keyword id="KW-0735">Signal-anchor</keyword>
<keyword id="KW-0808">Transferase</keyword>
<keyword id="KW-0812">Transmembrane</keyword>
<keyword id="KW-1133">Transmembrane helix</keyword>
<feature type="chain" id="PRO_0000149275" description="Alpha-N-acetylgalactosaminide alpha-2,6-sialyltransferase 3">
    <location>
        <begin position="1"/>
        <end position="305"/>
    </location>
</feature>
<feature type="topological domain" description="Cytoplasmic" evidence="3">
    <location>
        <begin position="1"/>
        <end position="8"/>
    </location>
</feature>
<feature type="transmembrane region" description="Helical; Signal-anchor for type II membrane protein" evidence="3">
    <location>
        <begin position="9"/>
        <end position="28"/>
    </location>
</feature>
<feature type="topological domain" description="Lumenal" evidence="3">
    <location>
        <begin position="29"/>
        <end position="305"/>
    </location>
</feature>
<feature type="glycosylation site" description="N-linked (GlcNAc...) asparagine" evidence="3">
    <location>
        <position position="148"/>
    </location>
</feature>
<feature type="glycosylation site" description="N-linked (GlcNAc...) asparagine" evidence="3">
    <location>
        <position position="239"/>
    </location>
</feature>
<feature type="glycosylation site" description="N-linked (GlcNAc...) asparagine" evidence="3">
    <location>
        <position position="301"/>
    </location>
</feature>
<feature type="disulfide bond" evidence="1">
    <location>
        <begin position="80"/>
        <end position="229"/>
    </location>
</feature>
<feature type="splice variant" id="VSP_013218" description="In isoform 2." evidence="8">
    <original>RVQ</original>
    <variation>STE</variation>
    <location>
        <begin position="208"/>
        <end position="210"/>
    </location>
</feature>
<feature type="splice variant" id="VSP_013219" description="In isoform 2." evidence="8">
    <location>
        <begin position="211"/>
        <end position="305"/>
    </location>
</feature>
<feature type="sequence variant" id="VAR_055846" description="In dbSNP:rs1184626." evidence="4 7">
    <original>L</original>
    <variation>I</variation>
    <location>
        <position position="223"/>
    </location>
</feature>
<feature type="sequence conflict" description="In Ref. 2; BAC03611." evidence="11" ref="2">
    <original>V</original>
    <variation>I</variation>
    <location>
        <position position="169"/>
    </location>
</feature>
<protein>
    <recommendedName>
        <fullName>Alpha-N-acetylgalactosaminide alpha-2,6-sialyltransferase 3</fullName>
        <ecNumber evidence="5 6">2.4.3.7</ecNumber>
    </recommendedName>
    <alternativeName>
        <fullName>GalNAc alpha-2,6-sialyltransferase III</fullName>
    </alternativeName>
    <alternativeName>
        <fullName evidence="9 10">ST6GalNAc III</fullName>
        <shortName>ST6GalNAcIII</shortName>
    </alternativeName>
    <alternativeName>
        <fullName>STY</fullName>
    </alternativeName>
    <alternativeName>
        <fullName>Sialyltransferase 7C</fullName>
        <shortName>SIAT7-C</shortName>
    </alternativeName>
</protein>
<name>SIA7C_HUMAN</name>
<sequence length="305" mass="35395">MACILKRKSVIAVSFIAAFLFLLVVRLVNEVNFPLLLNCFGQPGTKWIPFSYTYRRPLRTHYGYINVKTQEPLQLDCDLCAIVSNSGQMVGQKVGNEIDRSSCIWRMNNAPTKGYEEDVGRMTMIRVVSHTSVPLLLKNPDYFFKEANTTIYVIWGPFRNMRKDGNGIVYNMLKKTVGIYPNAQIYVTTEKRMSYCDGVFKKETGKDRVQSGSYLSTGWFTFLLAMDACYGIHVYGMINDTYCKTEGYRKVPYHYYEQGRDECDEYFLHEHAPYGGHRFITEKKVFAKWAKKHRIIFTHPNWTLS</sequence>
<accession>Q8NDV1</accession>
<accession>Q6PCE0</accession>
<accession>Q6UX29</accession>
<accession>Q8N259</accession>
<reference key="1">
    <citation type="submission" date="2002-09" db="EMBL/GenBank/DDBJ databases">
        <title>Molecular cloning and expression of human ST6GALNAC III.</title>
        <authorList>
            <person name="Harduin-Lepers A."/>
        </authorList>
    </citation>
    <scope>NUCLEOTIDE SEQUENCE [MRNA] (ISOFORM 1)</scope>
</reference>
<reference key="2">
    <citation type="journal article" date="2004" name="Nat. Genet.">
        <title>Complete sequencing and characterization of 21,243 full-length human cDNAs.</title>
        <authorList>
            <person name="Ota T."/>
            <person name="Suzuki Y."/>
            <person name="Nishikawa T."/>
            <person name="Otsuki T."/>
            <person name="Sugiyama T."/>
            <person name="Irie R."/>
            <person name="Wakamatsu A."/>
            <person name="Hayashi K."/>
            <person name="Sato H."/>
            <person name="Nagai K."/>
            <person name="Kimura K."/>
            <person name="Makita H."/>
            <person name="Sekine M."/>
            <person name="Obayashi M."/>
            <person name="Nishi T."/>
            <person name="Shibahara T."/>
            <person name="Tanaka T."/>
            <person name="Ishii S."/>
            <person name="Yamamoto J."/>
            <person name="Saito K."/>
            <person name="Kawai Y."/>
            <person name="Isono Y."/>
            <person name="Nakamura Y."/>
            <person name="Nagahari K."/>
            <person name="Murakami K."/>
            <person name="Yasuda T."/>
            <person name="Iwayanagi T."/>
            <person name="Wagatsuma M."/>
            <person name="Shiratori A."/>
            <person name="Sudo H."/>
            <person name="Hosoiri T."/>
            <person name="Kaku Y."/>
            <person name="Kodaira H."/>
            <person name="Kondo H."/>
            <person name="Sugawara M."/>
            <person name="Takahashi M."/>
            <person name="Kanda K."/>
            <person name="Yokoi T."/>
            <person name="Furuya T."/>
            <person name="Kikkawa E."/>
            <person name="Omura Y."/>
            <person name="Abe K."/>
            <person name="Kamihara K."/>
            <person name="Katsuta N."/>
            <person name="Sato K."/>
            <person name="Tanikawa M."/>
            <person name="Yamazaki M."/>
            <person name="Ninomiya K."/>
            <person name="Ishibashi T."/>
            <person name="Yamashita H."/>
            <person name="Murakawa K."/>
            <person name="Fujimori K."/>
            <person name="Tanai H."/>
            <person name="Kimata M."/>
            <person name="Watanabe M."/>
            <person name="Hiraoka S."/>
            <person name="Chiba Y."/>
            <person name="Ishida S."/>
            <person name="Ono Y."/>
            <person name="Takiguchi S."/>
            <person name="Watanabe S."/>
            <person name="Yosida M."/>
            <person name="Hotuta T."/>
            <person name="Kusano J."/>
            <person name="Kanehori K."/>
            <person name="Takahashi-Fujii A."/>
            <person name="Hara H."/>
            <person name="Tanase T.-O."/>
            <person name="Nomura Y."/>
            <person name="Togiya S."/>
            <person name="Komai F."/>
            <person name="Hara R."/>
            <person name="Takeuchi K."/>
            <person name="Arita M."/>
            <person name="Imose N."/>
            <person name="Musashino K."/>
            <person name="Yuuki H."/>
            <person name="Oshima A."/>
            <person name="Sasaki N."/>
            <person name="Aotsuka S."/>
            <person name="Yoshikawa Y."/>
            <person name="Matsunawa H."/>
            <person name="Ichihara T."/>
            <person name="Shiohata N."/>
            <person name="Sano S."/>
            <person name="Moriya S."/>
            <person name="Momiyama H."/>
            <person name="Satoh N."/>
            <person name="Takami S."/>
            <person name="Terashima Y."/>
            <person name="Suzuki O."/>
            <person name="Nakagawa S."/>
            <person name="Senoh A."/>
            <person name="Mizoguchi H."/>
            <person name="Goto Y."/>
            <person name="Shimizu F."/>
            <person name="Wakebe H."/>
            <person name="Hishigaki H."/>
            <person name="Watanabe T."/>
            <person name="Sugiyama A."/>
            <person name="Takemoto M."/>
            <person name="Kawakami B."/>
            <person name="Yamazaki M."/>
            <person name="Watanabe K."/>
            <person name="Kumagai A."/>
            <person name="Itakura S."/>
            <person name="Fukuzumi Y."/>
            <person name="Fujimori Y."/>
            <person name="Komiyama M."/>
            <person name="Tashiro H."/>
            <person name="Tanigami A."/>
            <person name="Fujiwara T."/>
            <person name="Ono T."/>
            <person name="Yamada K."/>
            <person name="Fujii Y."/>
            <person name="Ozaki K."/>
            <person name="Hirao M."/>
            <person name="Ohmori Y."/>
            <person name="Kawabata A."/>
            <person name="Hikiji T."/>
            <person name="Kobatake N."/>
            <person name="Inagaki H."/>
            <person name="Ikema Y."/>
            <person name="Okamoto S."/>
            <person name="Okitani R."/>
            <person name="Kawakami T."/>
            <person name="Noguchi S."/>
            <person name="Itoh T."/>
            <person name="Shigeta K."/>
            <person name="Senba T."/>
            <person name="Matsumura K."/>
            <person name="Nakajima Y."/>
            <person name="Mizuno T."/>
            <person name="Morinaga M."/>
            <person name="Sasaki M."/>
            <person name="Togashi T."/>
            <person name="Oyama M."/>
            <person name="Hata H."/>
            <person name="Watanabe M."/>
            <person name="Komatsu T."/>
            <person name="Mizushima-Sugano J."/>
            <person name="Satoh T."/>
            <person name="Shirai Y."/>
            <person name="Takahashi Y."/>
            <person name="Nakagawa K."/>
            <person name="Okumura K."/>
            <person name="Nagase T."/>
            <person name="Nomura N."/>
            <person name="Kikuchi H."/>
            <person name="Masuho Y."/>
            <person name="Yamashita R."/>
            <person name="Nakai K."/>
            <person name="Yada T."/>
            <person name="Nakamura Y."/>
            <person name="Ohara O."/>
            <person name="Isogai T."/>
            <person name="Sugano S."/>
        </authorList>
    </citation>
    <scope>NUCLEOTIDE SEQUENCE [LARGE SCALE MRNA] (ISOFORM 1)</scope>
    <source>
        <tissue>Tongue</tissue>
    </source>
</reference>
<reference key="3">
    <citation type="journal article" date="2003" name="Genome Res.">
        <title>The secreted protein discovery initiative (SPDI), a large-scale effort to identify novel human secreted and transmembrane proteins: a bioinformatics assessment.</title>
        <authorList>
            <person name="Clark H.F."/>
            <person name="Gurney A.L."/>
            <person name="Abaya E."/>
            <person name="Baker K."/>
            <person name="Baldwin D.T."/>
            <person name="Brush J."/>
            <person name="Chen J."/>
            <person name="Chow B."/>
            <person name="Chui C."/>
            <person name="Crowley C."/>
            <person name="Currell B."/>
            <person name="Deuel B."/>
            <person name="Dowd P."/>
            <person name="Eaton D."/>
            <person name="Foster J.S."/>
            <person name="Grimaldi C."/>
            <person name="Gu Q."/>
            <person name="Hass P.E."/>
            <person name="Heldens S."/>
            <person name="Huang A."/>
            <person name="Kim H.S."/>
            <person name="Klimowski L."/>
            <person name="Jin Y."/>
            <person name="Johnson S."/>
            <person name="Lee J."/>
            <person name="Lewis L."/>
            <person name="Liao D."/>
            <person name="Mark M.R."/>
            <person name="Robbie E."/>
            <person name="Sanchez C."/>
            <person name="Schoenfeld J."/>
            <person name="Seshagiri S."/>
            <person name="Simmons L."/>
            <person name="Singh J."/>
            <person name="Smith V."/>
            <person name="Stinson J."/>
            <person name="Vagts A."/>
            <person name="Vandlen R.L."/>
            <person name="Watanabe C."/>
            <person name="Wieand D."/>
            <person name="Woods K."/>
            <person name="Xie M.-H."/>
            <person name="Yansura D.G."/>
            <person name="Yi S."/>
            <person name="Yu G."/>
            <person name="Yuan J."/>
            <person name="Zhang M."/>
            <person name="Zhang Z."/>
            <person name="Goddard A.D."/>
            <person name="Wood W.I."/>
            <person name="Godowski P.J."/>
            <person name="Gray A.M."/>
        </authorList>
    </citation>
    <scope>NUCLEOTIDE SEQUENCE [LARGE SCALE MRNA] (ISOFORM 2)</scope>
</reference>
<reference key="4">
    <citation type="submission" date="2005-09" db="EMBL/GenBank/DDBJ databases">
        <authorList>
            <person name="Mural R.J."/>
            <person name="Istrail S."/>
            <person name="Sutton G.G."/>
            <person name="Florea L."/>
            <person name="Halpern A.L."/>
            <person name="Mobarry C.M."/>
            <person name="Lippert R."/>
            <person name="Walenz B."/>
            <person name="Shatkay H."/>
            <person name="Dew I."/>
            <person name="Miller J.R."/>
            <person name="Flanigan M.J."/>
            <person name="Edwards N.J."/>
            <person name="Bolanos R."/>
            <person name="Fasulo D."/>
            <person name="Halldorsson B.V."/>
            <person name="Hannenhalli S."/>
            <person name="Turner R."/>
            <person name="Yooseph S."/>
            <person name="Lu F."/>
            <person name="Nusskern D.R."/>
            <person name="Shue B.C."/>
            <person name="Zheng X.H."/>
            <person name="Zhong F."/>
            <person name="Delcher A.L."/>
            <person name="Huson D.H."/>
            <person name="Kravitz S.A."/>
            <person name="Mouchard L."/>
            <person name="Reinert K."/>
            <person name="Remington K.A."/>
            <person name="Clark A.G."/>
            <person name="Waterman M.S."/>
            <person name="Eichler E.E."/>
            <person name="Adams M.D."/>
            <person name="Hunkapiller M.W."/>
            <person name="Myers E.W."/>
            <person name="Venter J.C."/>
        </authorList>
    </citation>
    <scope>NUCLEOTIDE SEQUENCE [LARGE SCALE GENOMIC DNA]</scope>
    <scope>VARIANT ILE-223</scope>
</reference>
<reference key="5">
    <citation type="journal article" date="2004" name="Genome Res.">
        <title>The status, quality, and expansion of the NIH full-length cDNA project: the Mammalian Gene Collection (MGC).</title>
        <authorList>
            <consortium name="The MGC Project Team"/>
        </authorList>
    </citation>
    <scope>NUCLEOTIDE SEQUENCE [LARGE SCALE MRNA] (ISOFORM 1)</scope>
    <scope>VARIANT ILE-223</scope>
    <source>
        <tissue>Placenta</tissue>
    </source>
</reference>
<reference key="6">
    <citation type="journal article" date="2005" name="J. Biochem.">
        <title>Molecular cloning and expression of human ST6GalNAc III: restricted tissue distribution and substrate specificity.</title>
        <authorList>
            <person name="Tsuchida A."/>
            <person name="Ogiso M."/>
            <person name="Nakamura Y."/>
            <person name="Kiso M."/>
            <person name="Furukawa K."/>
            <person name="Furukawa K."/>
        </authorList>
    </citation>
    <scope>FUNCTION</scope>
    <scope>CATALYTIC ACTIVITY</scope>
    <scope>BIOPHYSICOCHEMICAL PROPERTIES</scope>
    <scope>TISSUE SPECIFICITY</scope>
</reference>
<reference key="7">
    <citation type="journal article" date="2007" name="Biochem. J.">
        <title>Identification and expression of a sialyltransferase responsible for the synthesis of disialylgalactosylgloboside in normal and malignant kidney cells: downregulation of ST6GalNAc VI in renal cancers.</title>
        <authorList>
            <person name="Senda M."/>
            <person name="Ito A."/>
            <person name="Tsuchida A."/>
            <person name="Hagiwara T."/>
            <person name="Kaneda T."/>
            <person name="Nakamura Y."/>
            <person name="Kasama K."/>
            <person name="Kiso M."/>
            <person name="Yoshikawa K."/>
            <person name="Katagiri Y."/>
            <person name="Ono Y."/>
            <person name="Ogiso M."/>
            <person name="Urano T."/>
            <person name="Furukawa K."/>
            <person name="Oshima S."/>
            <person name="Furukawa K."/>
        </authorList>
    </citation>
    <scope>FUNCTION</scope>
    <scope>CATALYTIC ACTIVITY</scope>
    <scope>TISSUE SPECIFICITY</scope>
</reference>
<comment type="function">
    <text evidence="2 5 6">Transfers the sialyl group (N-acetyl-alpha-neuraminyl or NeuAc) from CMP-NeuAc to the GalNAc residue on the NeuAc-alpha-2,3-Gal-beta-1,3-GalNAc sequence of glycoproteins and glycolipids forming an alpha-2,6-linkage. Produces branched type disialyl structures by transfer of a sialyl group onto a GalNAc residue inside the backbone core chains. ST6GalNAcIII prefers glycolipids to glycoproteins, predominantly catalyzing the biosynthesis of ganglioside GD1alpha from GM1b (PubMed:16169874, PubMed:17123352). GD1alpha is a critical molecule in the communication and interaction between neuronal cells and their supportive cells, particularly in brain tissues, and functions as an adhesion molecule in the process of metastasis (By similarity). Sialylation of glycoproteins or glycosphingolipids is very important in tumor development, neuronal development, nerve repair, immunological processes and regulation of hormone sensitivity (PubMed:17123352).</text>
</comment>
<comment type="catalytic activity">
    <reaction evidence="5 6">
        <text>an alpha-Neu5Ac-(2-&gt;3)-beta-D-Gal-(1-&gt;3)-D-GlcNAc derivative + CMP-N-acetyl-beta-neuraminate = an alpha-Neu5Ac-(2-&gt;3)-beta-D-Gal-(1-&gt;3)-[alpha-Neu5Ac-(2-&gt;6)]-D-GlcNAc derivative + CMP + H(+)</text>
        <dbReference type="Rhea" id="RHEA:53896"/>
        <dbReference type="ChEBI" id="CHEBI:15378"/>
        <dbReference type="ChEBI" id="CHEBI:57812"/>
        <dbReference type="ChEBI" id="CHEBI:60377"/>
        <dbReference type="ChEBI" id="CHEBI:146021"/>
        <dbReference type="ChEBI" id="CHEBI:149714"/>
        <dbReference type="EC" id="2.4.3.7"/>
    </reaction>
    <physiologicalReaction direction="left-to-right" evidence="12 13">
        <dbReference type="Rhea" id="RHEA:53897"/>
    </physiologicalReaction>
</comment>
<comment type="catalytic activity">
    <reaction evidence="5 6">
        <text>a ganglioside GM1b (d18:1(4E)) + CMP-N-acetyl-beta-neuraminate = a ganglioside GD1alpha (d18:1(4E)) + CMP + H(+)</text>
        <dbReference type="Rhea" id="RHEA:41968"/>
        <dbReference type="ChEBI" id="CHEBI:15378"/>
        <dbReference type="ChEBI" id="CHEBI:57812"/>
        <dbReference type="ChEBI" id="CHEBI:60377"/>
        <dbReference type="ChEBI" id="CHEBI:78568"/>
        <dbReference type="ChEBI" id="CHEBI:78569"/>
    </reaction>
    <physiologicalReaction direction="left-to-right" evidence="12 13">
        <dbReference type="Rhea" id="RHEA:41969"/>
    </physiologicalReaction>
</comment>
<comment type="catalytic activity">
    <reaction evidence="6">
        <text>a globoside MSGG + CMP-N-acetyl-beta-neuraminate = a globoside DSGG + CMP + H(+)</text>
        <dbReference type="Rhea" id="RHEA:56088"/>
        <dbReference type="ChEBI" id="CHEBI:15378"/>
        <dbReference type="ChEBI" id="CHEBI:57812"/>
        <dbReference type="ChEBI" id="CHEBI:60377"/>
        <dbReference type="ChEBI" id="CHEBI:140623"/>
        <dbReference type="ChEBI" id="CHEBI:140624"/>
    </reaction>
    <physiologicalReaction direction="left-to-right" evidence="13">
        <dbReference type="Rhea" id="RHEA:56089"/>
    </physiologicalReaction>
</comment>
<comment type="catalytic activity">
    <reaction evidence="5 6">
        <text>3-O-[alpha-Neu5Ac-(2-&gt;3)-beta-D-Gal-(1-&gt;3)-alpha-D-GalNAc]-L-Ser-[protein] + CMP-N-acetyl-beta-neuraminate = a 3-O-{alpha-Neu5Ac-(2-&gt;3)-beta-D-Gal-(1-&gt;3)-[alpha-Neu5Ac-(2-&gt;6)]-alpha-D-GalNAc}-L-seryl-[protein] + CMP + H(+)</text>
        <dbReference type="Rhea" id="RHEA:65280"/>
        <dbReference type="Rhea" id="RHEA-COMP:16760"/>
        <dbReference type="Rhea" id="RHEA-COMP:16761"/>
        <dbReference type="ChEBI" id="CHEBI:15378"/>
        <dbReference type="ChEBI" id="CHEBI:57812"/>
        <dbReference type="ChEBI" id="CHEBI:60377"/>
        <dbReference type="ChEBI" id="CHEBI:156395"/>
        <dbReference type="ChEBI" id="CHEBI:156397"/>
    </reaction>
    <physiologicalReaction direction="left-to-right" evidence="12 13">
        <dbReference type="Rhea" id="RHEA:65281"/>
    </physiologicalReaction>
</comment>
<comment type="catalytic activity">
    <reaction evidence="5 6">
        <text>3-O-[alpha-Neu5Ac-(2-&gt;3)-beta-D-Gal-(1-&gt;3)-alpha-D-GalNAc]-L-Thr-[protein] + CMP-N-acetyl-beta-neuraminate = a 3-O-{alpha-Neu5Ac-(2-&gt;3)-beta-D-Gal-(1-&gt;3)-[alpha-Neu5Ac-(2-&gt;6)]-alpha-D-GalNAc}-L-threonyl-[protein] + CMP + H(+)</text>
        <dbReference type="Rhea" id="RHEA:65284"/>
        <dbReference type="Rhea" id="RHEA-COMP:16762"/>
        <dbReference type="Rhea" id="RHEA-COMP:16763"/>
        <dbReference type="ChEBI" id="CHEBI:15378"/>
        <dbReference type="ChEBI" id="CHEBI:57812"/>
        <dbReference type="ChEBI" id="CHEBI:60377"/>
        <dbReference type="ChEBI" id="CHEBI:156396"/>
        <dbReference type="ChEBI" id="CHEBI:156398"/>
    </reaction>
    <physiologicalReaction direction="left-to-right" evidence="12 13">
        <dbReference type="Rhea" id="RHEA:65285"/>
    </physiologicalReaction>
</comment>
<comment type="biophysicochemical properties">
    <kinetics>
        <KM evidence="5">0.02 mM for ganglioside GM1b</KM>
    </kinetics>
</comment>
<comment type="pathway">
    <text evidence="12 13">Protein modification; protein glycosylation.</text>
</comment>
<comment type="pathway">
    <text evidence="12 13">Glycolipid biosynthesis.</text>
</comment>
<comment type="interaction">
    <interactant intactId="EBI-12947081">
        <id>Q8NDV1</id>
    </interactant>
    <interactant intactId="EBI-10243654">
        <id>Q5BVD1</id>
        <label>TTMP</label>
    </interactant>
    <organismsDiffer>false</organismsDiffer>
    <experiments>3</experiments>
</comment>
<comment type="subcellular location">
    <subcellularLocation>
        <location evidence="11">Golgi apparatus membrane</location>
        <topology evidence="11">Single-pass type II membrane protein</topology>
    </subcellularLocation>
</comment>
<comment type="alternative products">
    <event type="alternative splicing"/>
    <isoform>
        <id>Q8NDV1-1</id>
        <name>1</name>
        <sequence type="displayed"/>
    </isoform>
    <isoform>
        <id>Q8NDV1-2</id>
        <name>2</name>
        <sequence type="described" ref="VSP_013218 VSP_013219"/>
    </isoform>
</comment>
<comment type="tissue specificity">
    <text evidence="5 6">Expressed in brain and kidney (PubMed:16169874, PubMed:17123352). Observed in the epithelium of the proximal tubules, marginal expression was also found in the distal tubules and collecting tubules (PubMed:17123352).</text>
</comment>
<comment type="similarity">
    <text evidence="11">Belongs to the glycosyltransferase 29 family.</text>
</comment>
<comment type="online information" name="Functional Glycomics Gateway - GTase">
    <link uri="http://www.functionalglycomics.org/glycomics/molecule/jsp/glycoEnzyme/viewGlycoEnzyme.jsp?gbpId=gt_hum_632"/>
    <text>ST6GalNAc III</text>
</comment>
<proteinExistence type="evidence at protein level"/>
<gene>
    <name type="primary">ST6GALNAC3</name>
    <name type="synonym">SIAT7C</name>
    <name type="ORF">UNQ2787/PRO7177</name>
</gene>